<proteinExistence type="inferred from homology"/>
<keyword id="KW-0315">Glutamine amidotransferase</keyword>
<keyword id="KW-0378">Hydrolase</keyword>
<keyword id="KW-0456">Lyase</keyword>
<keyword id="KW-0663">Pyridoxal phosphate</keyword>
<keyword id="KW-1185">Reference proteome</keyword>
<dbReference type="EC" id="4.3.3.6" evidence="1"/>
<dbReference type="EC" id="3.5.1.2" evidence="1"/>
<dbReference type="EMBL" id="CP000360">
    <property type="protein sequence ID" value="ABF40872.1"/>
    <property type="molecule type" value="Genomic_DNA"/>
</dbReference>
<dbReference type="RefSeq" id="WP_011522674.1">
    <property type="nucleotide sequence ID" value="NC_008009.1"/>
</dbReference>
<dbReference type="SMR" id="Q1IQH8"/>
<dbReference type="STRING" id="204669.Acid345_1871"/>
<dbReference type="MEROPS" id="C26.A32"/>
<dbReference type="EnsemblBacteria" id="ABF40872">
    <property type="protein sequence ID" value="ABF40872"/>
    <property type="gene ID" value="Acid345_1871"/>
</dbReference>
<dbReference type="KEGG" id="aba:Acid345_1871"/>
<dbReference type="eggNOG" id="COG0311">
    <property type="taxonomic scope" value="Bacteria"/>
</dbReference>
<dbReference type="HOGENOM" id="CLU_069674_2_0_0"/>
<dbReference type="OrthoDB" id="9810320at2"/>
<dbReference type="UniPathway" id="UPA00245"/>
<dbReference type="Proteomes" id="UP000002432">
    <property type="component" value="Chromosome"/>
</dbReference>
<dbReference type="GO" id="GO:0005829">
    <property type="term" value="C:cytosol"/>
    <property type="evidence" value="ECO:0007669"/>
    <property type="project" value="TreeGrafter"/>
</dbReference>
<dbReference type="GO" id="GO:1903600">
    <property type="term" value="C:glutaminase complex"/>
    <property type="evidence" value="ECO:0007669"/>
    <property type="project" value="TreeGrafter"/>
</dbReference>
<dbReference type="GO" id="GO:0004359">
    <property type="term" value="F:glutaminase activity"/>
    <property type="evidence" value="ECO:0007669"/>
    <property type="project" value="UniProtKB-UniRule"/>
</dbReference>
<dbReference type="GO" id="GO:0036381">
    <property type="term" value="F:pyridoxal 5'-phosphate synthase (glutamine hydrolysing) activity"/>
    <property type="evidence" value="ECO:0007669"/>
    <property type="project" value="UniProtKB-UniRule"/>
</dbReference>
<dbReference type="GO" id="GO:0006543">
    <property type="term" value="P:glutamine catabolic process"/>
    <property type="evidence" value="ECO:0007669"/>
    <property type="project" value="UniProtKB-UniRule"/>
</dbReference>
<dbReference type="GO" id="GO:0042823">
    <property type="term" value="P:pyridoxal phosphate biosynthetic process"/>
    <property type="evidence" value="ECO:0007669"/>
    <property type="project" value="UniProtKB-UniRule"/>
</dbReference>
<dbReference type="GO" id="GO:0008614">
    <property type="term" value="P:pyridoxine metabolic process"/>
    <property type="evidence" value="ECO:0007669"/>
    <property type="project" value="TreeGrafter"/>
</dbReference>
<dbReference type="CDD" id="cd01749">
    <property type="entry name" value="GATase1_PB"/>
    <property type="match status" value="1"/>
</dbReference>
<dbReference type="FunFam" id="3.40.50.880:FF:000010">
    <property type="entry name" value="uncharacterized protein LOC100176842 isoform X2"/>
    <property type="match status" value="1"/>
</dbReference>
<dbReference type="Gene3D" id="3.40.50.880">
    <property type="match status" value="1"/>
</dbReference>
<dbReference type="HAMAP" id="MF_01615">
    <property type="entry name" value="PdxT"/>
    <property type="match status" value="1"/>
</dbReference>
<dbReference type="InterPro" id="IPR029062">
    <property type="entry name" value="Class_I_gatase-like"/>
</dbReference>
<dbReference type="InterPro" id="IPR002161">
    <property type="entry name" value="PdxT/SNO"/>
</dbReference>
<dbReference type="InterPro" id="IPR021196">
    <property type="entry name" value="PdxT/SNO_CS"/>
</dbReference>
<dbReference type="NCBIfam" id="TIGR03800">
    <property type="entry name" value="PLP_synth_Pdx2"/>
    <property type="match status" value="1"/>
</dbReference>
<dbReference type="PANTHER" id="PTHR31559">
    <property type="entry name" value="PYRIDOXAL 5'-PHOSPHATE SYNTHASE SUBUNIT SNO"/>
    <property type="match status" value="1"/>
</dbReference>
<dbReference type="PANTHER" id="PTHR31559:SF0">
    <property type="entry name" value="PYRIDOXAL 5'-PHOSPHATE SYNTHASE SUBUNIT SNO1-RELATED"/>
    <property type="match status" value="1"/>
</dbReference>
<dbReference type="Pfam" id="PF01174">
    <property type="entry name" value="SNO"/>
    <property type="match status" value="1"/>
</dbReference>
<dbReference type="PIRSF" id="PIRSF005639">
    <property type="entry name" value="Glut_amidoT_SNO"/>
    <property type="match status" value="1"/>
</dbReference>
<dbReference type="SUPFAM" id="SSF52317">
    <property type="entry name" value="Class I glutamine amidotransferase-like"/>
    <property type="match status" value="1"/>
</dbReference>
<dbReference type="PROSITE" id="PS01236">
    <property type="entry name" value="PDXT_SNO_1"/>
    <property type="match status" value="1"/>
</dbReference>
<dbReference type="PROSITE" id="PS51130">
    <property type="entry name" value="PDXT_SNO_2"/>
    <property type="match status" value="1"/>
</dbReference>
<feature type="chain" id="PRO_0000255825" description="Pyridoxal 5'-phosphate synthase subunit PdxT">
    <location>
        <begin position="1"/>
        <end position="192"/>
    </location>
</feature>
<feature type="active site" description="Nucleophile" evidence="1">
    <location>
        <position position="76"/>
    </location>
</feature>
<feature type="active site" description="Charge relay system" evidence="1">
    <location>
        <position position="167"/>
    </location>
</feature>
<feature type="active site" description="Charge relay system" evidence="1">
    <location>
        <position position="169"/>
    </location>
</feature>
<feature type="binding site" evidence="1">
    <location>
        <begin position="46"/>
        <end position="48"/>
    </location>
    <ligand>
        <name>L-glutamine</name>
        <dbReference type="ChEBI" id="CHEBI:58359"/>
    </ligand>
</feature>
<feature type="binding site" evidence="1">
    <location>
        <position position="103"/>
    </location>
    <ligand>
        <name>L-glutamine</name>
        <dbReference type="ChEBI" id="CHEBI:58359"/>
    </ligand>
</feature>
<feature type="binding site" evidence="1">
    <location>
        <begin position="131"/>
        <end position="132"/>
    </location>
    <ligand>
        <name>L-glutamine</name>
        <dbReference type="ChEBI" id="CHEBI:58359"/>
    </ligand>
</feature>
<evidence type="ECO:0000255" key="1">
    <source>
        <dbReference type="HAMAP-Rule" id="MF_01615"/>
    </source>
</evidence>
<organism>
    <name type="scientific">Koribacter versatilis (strain Ellin345)</name>
    <dbReference type="NCBI Taxonomy" id="204669"/>
    <lineage>
        <taxon>Bacteria</taxon>
        <taxon>Pseudomonadati</taxon>
        <taxon>Acidobacteriota</taxon>
        <taxon>Terriglobia</taxon>
        <taxon>Terriglobales</taxon>
        <taxon>Candidatus Korobacteraceae</taxon>
        <taxon>Candidatus Korobacter</taxon>
    </lineage>
</organism>
<sequence length="192" mass="20933">MKIGVLALQGDFDAHRQVLERLGADVVMVRKPEQLREIEGLVIPGGESSTFLKLLGDAGFEELRKFVTTKPSFGTCAGAIMLAKQVENPAQKGTGALDIRVRRNAYGRQIESAILTSECSLPGGEMEMVYIRAPRIEEVGPGVEVLAKRDGHPVLVRQGKVLAATFHPELTGDTRVHELFLKMVRNGNSGEK</sequence>
<reference key="1">
    <citation type="journal article" date="2009" name="Appl. Environ. Microbiol.">
        <title>Three genomes from the phylum Acidobacteria provide insight into the lifestyles of these microorganisms in soils.</title>
        <authorList>
            <person name="Ward N.L."/>
            <person name="Challacombe J.F."/>
            <person name="Janssen P.H."/>
            <person name="Henrissat B."/>
            <person name="Coutinho P.M."/>
            <person name="Wu M."/>
            <person name="Xie G."/>
            <person name="Haft D.H."/>
            <person name="Sait M."/>
            <person name="Badger J."/>
            <person name="Barabote R.D."/>
            <person name="Bradley B."/>
            <person name="Brettin T.S."/>
            <person name="Brinkac L.M."/>
            <person name="Bruce D."/>
            <person name="Creasy T."/>
            <person name="Daugherty S.C."/>
            <person name="Davidsen T.M."/>
            <person name="DeBoy R.T."/>
            <person name="Detter J.C."/>
            <person name="Dodson R.J."/>
            <person name="Durkin A.S."/>
            <person name="Ganapathy A."/>
            <person name="Gwinn-Giglio M."/>
            <person name="Han C.S."/>
            <person name="Khouri H."/>
            <person name="Kiss H."/>
            <person name="Kothari S.P."/>
            <person name="Madupu R."/>
            <person name="Nelson K.E."/>
            <person name="Nelson W.C."/>
            <person name="Paulsen I."/>
            <person name="Penn K."/>
            <person name="Ren Q."/>
            <person name="Rosovitz M.J."/>
            <person name="Selengut J.D."/>
            <person name="Shrivastava S."/>
            <person name="Sullivan S.A."/>
            <person name="Tapia R."/>
            <person name="Thompson L.S."/>
            <person name="Watkins K.L."/>
            <person name="Yang Q."/>
            <person name="Yu C."/>
            <person name="Zafar N."/>
            <person name="Zhou L."/>
            <person name="Kuske C.R."/>
        </authorList>
    </citation>
    <scope>NUCLEOTIDE SEQUENCE [LARGE SCALE GENOMIC DNA]</scope>
    <source>
        <strain>Ellin345</strain>
    </source>
</reference>
<protein>
    <recommendedName>
        <fullName evidence="1">Pyridoxal 5'-phosphate synthase subunit PdxT</fullName>
        <ecNumber evidence="1">4.3.3.6</ecNumber>
    </recommendedName>
    <alternativeName>
        <fullName evidence="1">Pdx2</fullName>
    </alternativeName>
    <alternativeName>
        <fullName evidence="1">Pyridoxal 5'-phosphate synthase glutaminase subunit</fullName>
        <ecNumber evidence="1">3.5.1.2</ecNumber>
    </alternativeName>
</protein>
<gene>
    <name evidence="1" type="primary">pdxT</name>
    <name type="ordered locus">Acid345_1871</name>
</gene>
<name>PDXT_KORVE</name>
<comment type="function">
    <text evidence="1">Catalyzes the hydrolysis of glutamine to glutamate and ammonia as part of the biosynthesis of pyridoxal 5'-phosphate. The resulting ammonia molecule is channeled to the active site of PdxS.</text>
</comment>
<comment type="catalytic activity">
    <reaction evidence="1">
        <text>aldehydo-D-ribose 5-phosphate + D-glyceraldehyde 3-phosphate + L-glutamine = pyridoxal 5'-phosphate + L-glutamate + phosphate + 3 H2O + H(+)</text>
        <dbReference type="Rhea" id="RHEA:31507"/>
        <dbReference type="ChEBI" id="CHEBI:15377"/>
        <dbReference type="ChEBI" id="CHEBI:15378"/>
        <dbReference type="ChEBI" id="CHEBI:29985"/>
        <dbReference type="ChEBI" id="CHEBI:43474"/>
        <dbReference type="ChEBI" id="CHEBI:58273"/>
        <dbReference type="ChEBI" id="CHEBI:58359"/>
        <dbReference type="ChEBI" id="CHEBI:59776"/>
        <dbReference type="ChEBI" id="CHEBI:597326"/>
        <dbReference type="EC" id="4.3.3.6"/>
    </reaction>
</comment>
<comment type="catalytic activity">
    <reaction evidence="1">
        <text>L-glutamine + H2O = L-glutamate + NH4(+)</text>
        <dbReference type="Rhea" id="RHEA:15889"/>
        <dbReference type="ChEBI" id="CHEBI:15377"/>
        <dbReference type="ChEBI" id="CHEBI:28938"/>
        <dbReference type="ChEBI" id="CHEBI:29985"/>
        <dbReference type="ChEBI" id="CHEBI:58359"/>
        <dbReference type="EC" id="3.5.1.2"/>
    </reaction>
</comment>
<comment type="pathway">
    <text evidence="1">Cofactor biosynthesis; pyridoxal 5'-phosphate biosynthesis.</text>
</comment>
<comment type="subunit">
    <text evidence="1">In the presence of PdxS, forms a dodecamer of heterodimers. Only shows activity in the heterodimer.</text>
</comment>
<comment type="similarity">
    <text evidence="1">Belongs to the glutaminase PdxT/SNO family.</text>
</comment>
<accession>Q1IQH8</accession>